<sequence length="351" mass="39131">MESTDRSSQAKAFDEAKIGVKGLVDSGITEIPALFRATPATLASLKSPPPPKHLTIPTVDLKGASVVEKIGEAAEKWGLFHLVNHGIPVEVLERMIQGIRGFHEQEPEAKKRFYSRDHTRDVLYFSNHDLQNSEAASWRDTLGCYTAPEPPRLEDLPAVCGEIMLEYSKEIMSLGERLFELLSEALGLNSHHLKDMDCAKSQYMVGQHYPPCPQPDLTIGINKHTDISFLTVLLQDNVGGLQVFHEQYWIDVTPVPGALVINIGDFLQLITNDKFISAEHRVIANGSSEPRTSVAIVFSTFMRAYSRVYGPIKDLLSAENPAKYRDCTLTEFSTIFSSKTLDAPKLHHFKI</sequence>
<dbReference type="EC" id="1.14.-.-"/>
<dbReference type="EMBL" id="AC002560">
    <property type="protein sequence ID" value="AAF86540.1"/>
    <property type="status" value="ALT_SEQ"/>
    <property type="molecule type" value="Genomic_DNA"/>
</dbReference>
<dbReference type="EMBL" id="CP002684">
    <property type="protein sequence ID" value="AEE27568.1"/>
    <property type="molecule type" value="Genomic_DNA"/>
</dbReference>
<dbReference type="EMBL" id="AY049289">
    <property type="protein sequence ID" value="AAK83631.1"/>
    <property type="molecule type" value="mRNA"/>
</dbReference>
<dbReference type="EMBL" id="AY133559">
    <property type="protein sequence ID" value="AAM91389.1"/>
    <property type="molecule type" value="mRNA"/>
</dbReference>
<dbReference type="PIR" id="T00917">
    <property type="entry name" value="T00917"/>
</dbReference>
<dbReference type="RefSeq" id="NP_171839.1">
    <property type="nucleotide sequence ID" value="NM_100222.3"/>
</dbReference>
<dbReference type="SMR" id="Q94A78"/>
<dbReference type="FunCoup" id="Q94A78">
    <property type="interactions" value="176"/>
</dbReference>
<dbReference type="STRING" id="3702.Q94A78"/>
<dbReference type="PaxDb" id="3702-AT1G03400.1"/>
<dbReference type="ProteomicsDB" id="244366"/>
<dbReference type="EnsemblPlants" id="AT1G03400.1">
    <property type="protein sequence ID" value="AT1G03400.1"/>
    <property type="gene ID" value="AT1G03400"/>
</dbReference>
<dbReference type="GeneID" id="838751"/>
<dbReference type="Gramene" id="AT1G03400.1">
    <property type="protein sequence ID" value="AT1G03400.1"/>
    <property type="gene ID" value="AT1G03400"/>
</dbReference>
<dbReference type="KEGG" id="ath:AT1G03400"/>
<dbReference type="Araport" id="AT1G03400"/>
<dbReference type="TAIR" id="AT1G03400"/>
<dbReference type="eggNOG" id="KOG0143">
    <property type="taxonomic scope" value="Eukaryota"/>
</dbReference>
<dbReference type="HOGENOM" id="CLU_010119_0_0_1"/>
<dbReference type="InParanoid" id="Q94A78"/>
<dbReference type="OMA" id="NQWIDAS"/>
<dbReference type="OrthoDB" id="288590at2759"/>
<dbReference type="PhylomeDB" id="Q94A78"/>
<dbReference type="PRO" id="PR:Q94A78"/>
<dbReference type="Proteomes" id="UP000006548">
    <property type="component" value="Chromosome 1"/>
</dbReference>
<dbReference type="ExpressionAtlas" id="Q94A78">
    <property type="expression patterns" value="baseline and differential"/>
</dbReference>
<dbReference type="GO" id="GO:0009815">
    <property type="term" value="F:1-aminocyclopropane-1-carboxylate oxidase activity"/>
    <property type="evidence" value="ECO:0000250"/>
    <property type="project" value="TAIR"/>
</dbReference>
<dbReference type="GO" id="GO:0051213">
    <property type="term" value="F:dioxygenase activity"/>
    <property type="evidence" value="ECO:0007669"/>
    <property type="project" value="UniProtKB-ARBA"/>
</dbReference>
<dbReference type="GO" id="GO:0046872">
    <property type="term" value="F:metal ion binding"/>
    <property type="evidence" value="ECO:0007669"/>
    <property type="project" value="UniProtKB-KW"/>
</dbReference>
<dbReference type="GO" id="GO:0009058">
    <property type="term" value="P:biosynthetic process"/>
    <property type="evidence" value="ECO:0007669"/>
    <property type="project" value="UniProtKB-ARBA"/>
</dbReference>
<dbReference type="FunFam" id="2.60.120.330:FF:000005">
    <property type="entry name" value="1-aminocyclopropane-1-carboxylate oxidase homolog 1"/>
    <property type="match status" value="1"/>
</dbReference>
<dbReference type="Gene3D" id="2.60.120.330">
    <property type="entry name" value="B-lactam Antibiotic, Isopenicillin N Synthase, Chain"/>
    <property type="match status" value="1"/>
</dbReference>
<dbReference type="InterPro" id="IPR026992">
    <property type="entry name" value="DIOX_N"/>
</dbReference>
<dbReference type="InterPro" id="IPR044861">
    <property type="entry name" value="IPNS-like_FE2OG_OXY"/>
</dbReference>
<dbReference type="InterPro" id="IPR027443">
    <property type="entry name" value="IPNS-like_sf"/>
</dbReference>
<dbReference type="InterPro" id="IPR005123">
    <property type="entry name" value="Oxoglu/Fe-dep_dioxygenase_dom"/>
</dbReference>
<dbReference type="PANTHER" id="PTHR10209:SF742">
    <property type="entry name" value="1-AMINOCYCLOPROPANE-1-CARBOXYLATE OXIDASE HOMOLOG 4-RELATED"/>
    <property type="match status" value="1"/>
</dbReference>
<dbReference type="PANTHER" id="PTHR10209">
    <property type="entry name" value="OXIDOREDUCTASE, 2OG-FE II OXYGENASE FAMILY PROTEIN"/>
    <property type="match status" value="1"/>
</dbReference>
<dbReference type="Pfam" id="PF03171">
    <property type="entry name" value="2OG-FeII_Oxy"/>
    <property type="match status" value="1"/>
</dbReference>
<dbReference type="Pfam" id="PF14226">
    <property type="entry name" value="DIOX_N"/>
    <property type="match status" value="1"/>
</dbReference>
<dbReference type="SUPFAM" id="SSF51197">
    <property type="entry name" value="Clavaminate synthase-like"/>
    <property type="match status" value="1"/>
</dbReference>
<dbReference type="PROSITE" id="PS51471">
    <property type="entry name" value="FE2OG_OXY"/>
    <property type="match status" value="1"/>
</dbReference>
<comment type="cofactor">
    <cofactor evidence="1">
        <name>Fe(2+)</name>
        <dbReference type="ChEBI" id="CHEBI:29033"/>
    </cofactor>
    <text evidence="1">Binds 1 Fe(2+) ion per subunit.</text>
</comment>
<comment type="similarity">
    <text evidence="2">Belongs to the iron/ascorbate-dependent oxidoreductase family.</text>
</comment>
<comment type="sequence caution" evidence="2">
    <conflict type="erroneous gene model prediction">
        <sequence resource="EMBL-CDS" id="AAF86540"/>
    </conflict>
    <text>The predicted gene At1g03410 has been split into 2 genes: At1g03400 and At1g03410.</text>
</comment>
<gene>
    <name type="ordered locus">At1g03400</name>
    <name type="ORF">F21B7.39</name>
</gene>
<organism>
    <name type="scientific">Arabidopsis thaliana</name>
    <name type="common">Mouse-ear cress</name>
    <dbReference type="NCBI Taxonomy" id="3702"/>
    <lineage>
        <taxon>Eukaryota</taxon>
        <taxon>Viridiplantae</taxon>
        <taxon>Streptophyta</taxon>
        <taxon>Embryophyta</taxon>
        <taxon>Tracheophyta</taxon>
        <taxon>Spermatophyta</taxon>
        <taxon>Magnoliopsida</taxon>
        <taxon>eudicotyledons</taxon>
        <taxon>Gunneridae</taxon>
        <taxon>Pentapetalae</taxon>
        <taxon>rosids</taxon>
        <taxon>malvids</taxon>
        <taxon>Brassicales</taxon>
        <taxon>Brassicaceae</taxon>
        <taxon>Camelineae</taxon>
        <taxon>Arabidopsis</taxon>
    </lineage>
</organism>
<feature type="chain" id="PRO_0000408279" description="1-aminocyclopropane-1-carboxylate oxidase homolog 4">
    <location>
        <begin position="1"/>
        <end position="351"/>
    </location>
</feature>
<feature type="domain" description="Fe2OG dioxygenase" evidence="1">
    <location>
        <begin position="200"/>
        <end position="304"/>
    </location>
</feature>
<feature type="binding site" evidence="1">
    <location>
        <position position="224"/>
    </location>
    <ligand>
        <name>Fe cation</name>
        <dbReference type="ChEBI" id="CHEBI:24875"/>
    </ligand>
</feature>
<feature type="binding site" evidence="1">
    <location>
        <position position="226"/>
    </location>
    <ligand>
        <name>Fe cation</name>
        <dbReference type="ChEBI" id="CHEBI:24875"/>
    </ligand>
</feature>
<feature type="binding site" evidence="1">
    <location>
        <position position="280"/>
    </location>
    <ligand>
        <name>Fe cation</name>
        <dbReference type="ChEBI" id="CHEBI:24875"/>
    </ligand>
</feature>
<feature type="binding site" evidence="1">
    <location>
        <position position="291"/>
    </location>
    <ligand>
        <name>2-oxoglutarate</name>
        <dbReference type="ChEBI" id="CHEBI:16810"/>
    </ligand>
</feature>
<keyword id="KW-0408">Iron</keyword>
<keyword id="KW-0479">Metal-binding</keyword>
<keyword id="KW-0560">Oxidoreductase</keyword>
<keyword id="KW-1185">Reference proteome</keyword>
<proteinExistence type="evidence at transcript level"/>
<accession>Q94A78</accession>
<accession>Q9LR82</accession>
<reference key="1">
    <citation type="journal article" date="2000" name="Nature">
        <title>Sequence and analysis of chromosome 1 of the plant Arabidopsis thaliana.</title>
        <authorList>
            <person name="Theologis A."/>
            <person name="Ecker J.R."/>
            <person name="Palm C.J."/>
            <person name="Federspiel N.A."/>
            <person name="Kaul S."/>
            <person name="White O."/>
            <person name="Alonso J."/>
            <person name="Altafi H."/>
            <person name="Araujo R."/>
            <person name="Bowman C.L."/>
            <person name="Brooks S.Y."/>
            <person name="Buehler E."/>
            <person name="Chan A."/>
            <person name="Chao Q."/>
            <person name="Chen H."/>
            <person name="Cheuk R.F."/>
            <person name="Chin C.W."/>
            <person name="Chung M.K."/>
            <person name="Conn L."/>
            <person name="Conway A.B."/>
            <person name="Conway A.R."/>
            <person name="Creasy T.H."/>
            <person name="Dewar K."/>
            <person name="Dunn P."/>
            <person name="Etgu P."/>
            <person name="Feldblyum T.V."/>
            <person name="Feng J.-D."/>
            <person name="Fong B."/>
            <person name="Fujii C.Y."/>
            <person name="Gill J.E."/>
            <person name="Goldsmith A.D."/>
            <person name="Haas B."/>
            <person name="Hansen N.F."/>
            <person name="Hughes B."/>
            <person name="Huizar L."/>
            <person name="Hunter J.L."/>
            <person name="Jenkins J."/>
            <person name="Johnson-Hopson C."/>
            <person name="Khan S."/>
            <person name="Khaykin E."/>
            <person name="Kim C.J."/>
            <person name="Koo H.L."/>
            <person name="Kremenetskaia I."/>
            <person name="Kurtz D.B."/>
            <person name="Kwan A."/>
            <person name="Lam B."/>
            <person name="Langin-Hooper S."/>
            <person name="Lee A."/>
            <person name="Lee J.M."/>
            <person name="Lenz C.A."/>
            <person name="Li J.H."/>
            <person name="Li Y.-P."/>
            <person name="Lin X."/>
            <person name="Liu S.X."/>
            <person name="Liu Z.A."/>
            <person name="Luros J.S."/>
            <person name="Maiti R."/>
            <person name="Marziali A."/>
            <person name="Militscher J."/>
            <person name="Miranda M."/>
            <person name="Nguyen M."/>
            <person name="Nierman W.C."/>
            <person name="Osborne B.I."/>
            <person name="Pai G."/>
            <person name="Peterson J."/>
            <person name="Pham P.K."/>
            <person name="Rizzo M."/>
            <person name="Rooney T."/>
            <person name="Rowley D."/>
            <person name="Sakano H."/>
            <person name="Salzberg S.L."/>
            <person name="Schwartz J.R."/>
            <person name="Shinn P."/>
            <person name="Southwick A.M."/>
            <person name="Sun H."/>
            <person name="Tallon L.J."/>
            <person name="Tambunga G."/>
            <person name="Toriumi M.J."/>
            <person name="Town C.D."/>
            <person name="Utterback T."/>
            <person name="Van Aken S."/>
            <person name="Vaysberg M."/>
            <person name="Vysotskaia V.S."/>
            <person name="Walker M."/>
            <person name="Wu D."/>
            <person name="Yu G."/>
            <person name="Fraser C.M."/>
            <person name="Venter J.C."/>
            <person name="Davis R.W."/>
        </authorList>
    </citation>
    <scope>NUCLEOTIDE SEQUENCE [LARGE SCALE GENOMIC DNA]</scope>
    <source>
        <strain>cv. Columbia</strain>
    </source>
</reference>
<reference key="2">
    <citation type="journal article" date="2017" name="Plant J.">
        <title>Araport11: a complete reannotation of the Arabidopsis thaliana reference genome.</title>
        <authorList>
            <person name="Cheng C.Y."/>
            <person name="Krishnakumar V."/>
            <person name="Chan A.P."/>
            <person name="Thibaud-Nissen F."/>
            <person name="Schobel S."/>
            <person name="Town C.D."/>
        </authorList>
    </citation>
    <scope>GENOME REANNOTATION</scope>
    <source>
        <strain>cv. Columbia</strain>
    </source>
</reference>
<reference key="3">
    <citation type="journal article" date="2003" name="Science">
        <title>Empirical analysis of transcriptional activity in the Arabidopsis genome.</title>
        <authorList>
            <person name="Yamada K."/>
            <person name="Lim J."/>
            <person name="Dale J.M."/>
            <person name="Chen H."/>
            <person name="Shinn P."/>
            <person name="Palm C.J."/>
            <person name="Southwick A.M."/>
            <person name="Wu H.C."/>
            <person name="Kim C.J."/>
            <person name="Nguyen M."/>
            <person name="Pham P.K."/>
            <person name="Cheuk R.F."/>
            <person name="Karlin-Newmann G."/>
            <person name="Liu S.X."/>
            <person name="Lam B."/>
            <person name="Sakano H."/>
            <person name="Wu T."/>
            <person name="Yu G."/>
            <person name="Miranda M."/>
            <person name="Quach H.L."/>
            <person name="Tripp M."/>
            <person name="Chang C.H."/>
            <person name="Lee J.M."/>
            <person name="Toriumi M.J."/>
            <person name="Chan M.M."/>
            <person name="Tang C.C."/>
            <person name="Onodera C.S."/>
            <person name="Deng J.M."/>
            <person name="Akiyama K."/>
            <person name="Ansari Y."/>
            <person name="Arakawa T."/>
            <person name="Banh J."/>
            <person name="Banno F."/>
            <person name="Bowser L."/>
            <person name="Brooks S.Y."/>
            <person name="Carninci P."/>
            <person name="Chao Q."/>
            <person name="Choy N."/>
            <person name="Enju A."/>
            <person name="Goldsmith A.D."/>
            <person name="Gurjal M."/>
            <person name="Hansen N.F."/>
            <person name="Hayashizaki Y."/>
            <person name="Johnson-Hopson C."/>
            <person name="Hsuan V.W."/>
            <person name="Iida K."/>
            <person name="Karnes M."/>
            <person name="Khan S."/>
            <person name="Koesema E."/>
            <person name="Ishida J."/>
            <person name="Jiang P.X."/>
            <person name="Jones T."/>
            <person name="Kawai J."/>
            <person name="Kamiya A."/>
            <person name="Meyers C."/>
            <person name="Nakajima M."/>
            <person name="Narusaka M."/>
            <person name="Seki M."/>
            <person name="Sakurai T."/>
            <person name="Satou M."/>
            <person name="Tamse R."/>
            <person name="Vaysberg M."/>
            <person name="Wallender E.K."/>
            <person name="Wong C."/>
            <person name="Yamamura Y."/>
            <person name="Yuan S."/>
            <person name="Shinozaki K."/>
            <person name="Davis R.W."/>
            <person name="Theologis A."/>
            <person name="Ecker J.R."/>
        </authorList>
    </citation>
    <scope>NUCLEOTIDE SEQUENCE [LARGE SCALE MRNA]</scope>
    <source>
        <strain>cv. Columbia</strain>
    </source>
</reference>
<name>ACCH4_ARATH</name>
<protein>
    <recommendedName>
        <fullName>1-aminocyclopropane-1-carboxylate oxidase homolog 4</fullName>
        <ecNumber>1.14.-.-</ecNumber>
    </recommendedName>
</protein>
<evidence type="ECO:0000255" key="1">
    <source>
        <dbReference type="PROSITE-ProRule" id="PRU00805"/>
    </source>
</evidence>
<evidence type="ECO:0000305" key="2"/>